<protein>
    <recommendedName>
        <fullName>Chalcone synthase</fullName>
        <ecNumber>2.3.1.74</ecNumber>
    </recommendedName>
    <alternativeName>
        <fullName>Naringenin-chalcone synthase</fullName>
    </alternativeName>
</protein>
<dbReference type="EC" id="2.3.1.74"/>
<dbReference type="EMBL" id="Z67982">
    <property type="protein sequence ID" value="CAA91923.1"/>
    <property type="molecule type" value="mRNA"/>
</dbReference>
<dbReference type="PIR" id="T10713">
    <property type="entry name" value="T10713"/>
</dbReference>
<dbReference type="SMR" id="P48389"/>
<dbReference type="UniPathway" id="UPA00154"/>
<dbReference type="GO" id="GO:0016210">
    <property type="term" value="F:naringenin-chalcone synthase activity"/>
    <property type="evidence" value="ECO:0007669"/>
    <property type="project" value="UniProtKB-EC"/>
</dbReference>
<dbReference type="GO" id="GO:0009813">
    <property type="term" value="P:flavonoid biosynthetic process"/>
    <property type="evidence" value="ECO:0007669"/>
    <property type="project" value="UniProtKB-UniPathway"/>
</dbReference>
<dbReference type="GO" id="GO:0030639">
    <property type="term" value="P:polyketide biosynthetic process"/>
    <property type="evidence" value="ECO:0007669"/>
    <property type="project" value="TreeGrafter"/>
</dbReference>
<dbReference type="CDD" id="cd00831">
    <property type="entry name" value="CHS_like"/>
    <property type="match status" value="1"/>
</dbReference>
<dbReference type="FunFam" id="3.40.47.10:FF:000014">
    <property type="entry name" value="Chalcone synthase 1"/>
    <property type="match status" value="1"/>
</dbReference>
<dbReference type="FunFam" id="3.40.47.10:FF:000025">
    <property type="entry name" value="Chalcone synthase 2"/>
    <property type="match status" value="1"/>
</dbReference>
<dbReference type="Gene3D" id="3.40.47.10">
    <property type="match status" value="2"/>
</dbReference>
<dbReference type="InterPro" id="IPR012328">
    <property type="entry name" value="Chalcone/stilbene_synt_C"/>
</dbReference>
<dbReference type="InterPro" id="IPR001099">
    <property type="entry name" value="Chalcone/stilbene_synt_N"/>
</dbReference>
<dbReference type="InterPro" id="IPR018088">
    <property type="entry name" value="Chalcone/stilbene_synthase_AS"/>
</dbReference>
<dbReference type="InterPro" id="IPR011141">
    <property type="entry name" value="Polyketide_synthase_type-III"/>
</dbReference>
<dbReference type="InterPro" id="IPR016039">
    <property type="entry name" value="Thiolase-like"/>
</dbReference>
<dbReference type="PANTHER" id="PTHR11877:SF14">
    <property type="entry name" value="CHALCONE SYNTHASE"/>
    <property type="match status" value="1"/>
</dbReference>
<dbReference type="PANTHER" id="PTHR11877">
    <property type="entry name" value="HYDROXYMETHYLGLUTARYL-COA SYNTHASE"/>
    <property type="match status" value="1"/>
</dbReference>
<dbReference type="Pfam" id="PF02797">
    <property type="entry name" value="Chal_sti_synt_C"/>
    <property type="match status" value="1"/>
</dbReference>
<dbReference type="Pfam" id="PF00195">
    <property type="entry name" value="Chal_sti_synt_N"/>
    <property type="match status" value="1"/>
</dbReference>
<dbReference type="PIRSF" id="PIRSF000451">
    <property type="entry name" value="PKS_III"/>
    <property type="match status" value="1"/>
</dbReference>
<dbReference type="SUPFAM" id="SSF53901">
    <property type="entry name" value="Thiolase-like"/>
    <property type="match status" value="2"/>
</dbReference>
<dbReference type="PROSITE" id="PS00441">
    <property type="entry name" value="CHALCONE_SYNTH"/>
    <property type="match status" value="1"/>
</dbReference>
<comment type="function">
    <text>The primary product of this enzyme is 4,2',4',6'-tetrahydroxychalcone (also termed naringenin-chalcone or chalcone) which can under specific conditions spontaneously isomerize into naringenin.</text>
</comment>
<comment type="catalytic activity">
    <reaction evidence="1">
        <text>(E)-4-coumaroyl-CoA + 3 malonyl-CoA + 3 H(+) = 2',4,4',6'-tetrahydroxychalcone + 3 CO2 + 4 CoA</text>
        <dbReference type="Rhea" id="RHEA:11128"/>
        <dbReference type="ChEBI" id="CHEBI:15378"/>
        <dbReference type="ChEBI" id="CHEBI:15413"/>
        <dbReference type="ChEBI" id="CHEBI:16526"/>
        <dbReference type="ChEBI" id="CHEBI:57287"/>
        <dbReference type="ChEBI" id="CHEBI:57384"/>
        <dbReference type="ChEBI" id="CHEBI:85008"/>
        <dbReference type="EC" id="2.3.1.74"/>
    </reaction>
</comment>
<comment type="pathway">
    <text>Secondary metabolite biosynthesis; flavonoid biosynthesis.</text>
</comment>
<comment type="similarity">
    <text evidence="2">Belongs to the thiolase-like superfamily. Chalcone/stilbene synthases family.</text>
</comment>
<accession>P48389</accession>
<proteinExistence type="evidence at transcript level"/>
<feature type="chain" id="PRO_0000215973" description="Chalcone synthase">
    <location>
        <begin position="1"/>
        <end position="391"/>
    </location>
</feature>
<feature type="active site" evidence="1">
    <location>
        <position position="164"/>
    </location>
</feature>
<sequence length="391" mass="42795">MASIEEIRQAPRADGPATILAIGTATPPNAIYQADYPDYYFRVTKSEHMTELKEKFRRMCDKSMIKKRYMYLTEEILKENPNLCEYMGSSLDTRQDMVVSEVPRLGKEAAVKAIKEWGQPKSKITHVIMCTTSGVDMPGADYQLTKLLGLRPSVRRFMLYQQGCFAGGTVLRLAKDLAENNKDARVLVVCSEITAICFRGPTEAALDSMVGQALFGDGAGALIVGSDPDLSIERPLFQMAWAGQTLLPDSDGAIDGHLREVGLTFHLLKDVPGIISKNITNALEDAFSPIGVSDWNNLFWIAHPGGPAILDQVEAKLGLKEEKLAATRNVLSDFGNMSSACVLFILDEMRKKSLRDGATTTGEGLDWGVLFGFGPSLTVETVVLHSVPLNC</sequence>
<gene>
    <name type="primary">CHS</name>
</gene>
<keyword id="KW-0012">Acyltransferase</keyword>
<keyword id="KW-0284">Flavonoid biosynthesis</keyword>
<keyword id="KW-0808">Transferase</keyword>
<evidence type="ECO:0000255" key="1">
    <source>
        <dbReference type="PROSITE-ProRule" id="PRU10023"/>
    </source>
</evidence>
<evidence type="ECO:0000305" key="2"/>
<name>CHSY_DIACA</name>
<organism>
    <name type="scientific">Dianthus caryophyllus</name>
    <name type="common">Carnation</name>
    <name type="synonym">Clove pink</name>
    <dbReference type="NCBI Taxonomy" id="3570"/>
    <lineage>
        <taxon>Eukaryota</taxon>
        <taxon>Viridiplantae</taxon>
        <taxon>Streptophyta</taxon>
        <taxon>Embryophyta</taxon>
        <taxon>Tracheophyta</taxon>
        <taxon>Spermatophyta</taxon>
        <taxon>Magnoliopsida</taxon>
        <taxon>eudicotyledons</taxon>
        <taxon>Gunneridae</taxon>
        <taxon>Pentapetalae</taxon>
        <taxon>Caryophyllales</taxon>
        <taxon>Caryophyllaceae</taxon>
        <taxon>Caryophylleae</taxon>
        <taxon>Dianthus</taxon>
    </lineage>
</organism>
<reference key="1">
    <citation type="submission" date="1995-11" db="EMBL/GenBank/DDBJ databases">
        <authorList>
            <person name="Henkel J."/>
            <person name="Sommer H."/>
            <person name="Forkmann G."/>
        </authorList>
    </citation>
    <scope>NUCLEOTIDE SEQUENCE [MRNA]</scope>
    <source>
        <strain>cv. Tanga</strain>
        <tissue>Petal</tissue>
    </source>
</reference>